<sequence length="403" mass="45805">MDGSKFDDAQTGEQKIRNFNINFGPQHPAAHGVLRLVLELDGEIVERCDPHIGLLHRGTEKLMESRTYLQNLPYFDRLDYVAPMNQEHAWCLAIEKLTGVEVPRRAQLIRVLYSEIGRILNHLLNITTQAMDVGALTPPLWGFEEREKLMIFYERACGARLHAAYFRPGGVHQDLPDELLDDIDLWAMEFPKVMDDIDGLLTENRIFKQRNCDIGVVTEDDIQKYGFSGVMVRGSGLAWDLRRAQPYECYDEFDFQIPVGKNGDCYDRYLVRMEEMRQSLSIIRQAIAKLREATGDVLARGKLTPPKRGDMKTSMESLIHHFKLYTEGFHVPEGEVYAAVEAPKGEFGVYLVADGSNKPYRAKLRAPGFLHLQAMDYVAKGHQLADVAAIIGTMDIVFGEIDR</sequence>
<evidence type="ECO:0000255" key="1">
    <source>
        <dbReference type="HAMAP-Rule" id="MF_01358"/>
    </source>
</evidence>
<reference key="1">
    <citation type="submission" date="2006-05" db="EMBL/GenBank/DDBJ databases">
        <title>Complete sequence of chromosome of Silicibacter sp. TM1040.</title>
        <authorList>
            <consortium name="US DOE Joint Genome Institute"/>
            <person name="Copeland A."/>
            <person name="Lucas S."/>
            <person name="Lapidus A."/>
            <person name="Barry K."/>
            <person name="Detter J.C."/>
            <person name="Glavina del Rio T."/>
            <person name="Hammon N."/>
            <person name="Israni S."/>
            <person name="Dalin E."/>
            <person name="Tice H."/>
            <person name="Pitluck S."/>
            <person name="Brettin T."/>
            <person name="Bruce D."/>
            <person name="Han C."/>
            <person name="Tapia R."/>
            <person name="Goodwin L."/>
            <person name="Thompson L.S."/>
            <person name="Gilna P."/>
            <person name="Schmutz J."/>
            <person name="Larimer F."/>
            <person name="Land M."/>
            <person name="Hauser L."/>
            <person name="Kyrpides N."/>
            <person name="Kim E."/>
            <person name="Belas R."/>
            <person name="Moran M.A."/>
            <person name="Buchan A."/>
            <person name="Gonzalez J.M."/>
            <person name="Schell M.A."/>
            <person name="Sun F."/>
            <person name="Richardson P."/>
        </authorList>
    </citation>
    <scope>NUCLEOTIDE SEQUENCE [LARGE SCALE GENOMIC DNA]</scope>
    <source>
        <strain>TM1040</strain>
    </source>
</reference>
<accession>Q1GIN9</accession>
<feature type="chain" id="PRO_0000357928" description="NADH-quinone oxidoreductase subunit D">
    <location>
        <begin position="1"/>
        <end position="403"/>
    </location>
</feature>
<dbReference type="EC" id="7.1.1.-" evidence="1"/>
<dbReference type="EMBL" id="CP000377">
    <property type="protein sequence ID" value="ABF63477.1"/>
    <property type="molecule type" value="Genomic_DNA"/>
</dbReference>
<dbReference type="RefSeq" id="WP_011538089.1">
    <property type="nucleotide sequence ID" value="NC_008044.1"/>
</dbReference>
<dbReference type="SMR" id="Q1GIN9"/>
<dbReference type="STRING" id="292414.TM1040_0744"/>
<dbReference type="KEGG" id="sit:TM1040_0744"/>
<dbReference type="eggNOG" id="COG0649">
    <property type="taxonomic scope" value="Bacteria"/>
</dbReference>
<dbReference type="HOGENOM" id="CLU_015134_1_1_5"/>
<dbReference type="OrthoDB" id="9801496at2"/>
<dbReference type="Proteomes" id="UP000000636">
    <property type="component" value="Chromosome"/>
</dbReference>
<dbReference type="GO" id="GO:0005886">
    <property type="term" value="C:plasma membrane"/>
    <property type="evidence" value="ECO:0007669"/>
    <property type="project" value="UniProtKB-SubCell"/>
</dbReference>
<dbReference type="GO" id="GO:0051287">
    <property type="term" value="F:NAD binding"/>
    <property type="evidence" value="ECO:0007669"/>
    <property type="project" value="InterPro"/>
</dbReference>
<dbReference type="GO" id="GO:0050136">
    <property type="term" value="F:NADH:ubiquinone reductase (non-electrogenic) activity"/>
    <property type="evidence" value="ECO:0007669"/>
    <property type="project" value="UniProtKB-UniRule"/>
</dbReference>
<dbReference type="GO" id="GO:0048038">
    <property type="term" value="F:quinone binding"/>
    <property type="evidence" value="ECO:0007669"/>
    <property type="project" value="UniProtKB-KW"/>
</dbReference>
<dbReference type="FunFam" id="1.10.645.10:FF:000005">
    <property type="entry name" value="NADH-quinone oxidoreductase subunit D"/>
    <property type="match status" value="1"/>
</dbReference>
<dbReference type="Gene3D" id="1.10.645.10">
    <property type="entry name" value="Cytochrome-c3 Hydrogenase, chain B"/>
    <property type="match status" value="1"/>
</dbReference>
<dbReference type="HAMAP" id="MF_01358">
    <property type="entry name" value="NDH1_NuoD"/>
    <property type="match status" value="1"/>
</dbReference>
<dbReference type="InterPro" id="IPR001135">
    <property type="entry name" value="NADH_Q_OxRdtase_suD"/>
</dbReference>
<dbReference type="InterPro" id="IPR014029">
    <property type="entry name" value="NADH_UbQ_OxRdtase_49kDa_CS"/>
</dbReference>
<dbReference type="InterPro" id="IPR022885">
    <property type="entry name" value="NDH1_su_D/H"/>
</dbReference>
<dbReference type="InterPro" id="IPR029014">
    <property type="entry name" value="NiFe-Hase_large"/>
</dbReference>
<dbReference type="NCBIfam" id="TIGR01962">
    <property type="entry name" value="NuoD"/>
    <property type="match status" value="1"/>
</dbReference>
<dbReference type="NCBIfam" id="NF004739">
    <property type="entry name" value="PRK06075.1"/>
    <property type="match status" value="1"/>
</dbReference>
<dbReference type="PANTHER" id="PTHR11993:SF10">
    <property type="entry name" value="NADH DEHYDROGENASE [UBIQUINONE] IRON-SULFUR PROTEIN 2, MITOCHONDRIAL"/>
    <property type="match status" value="1"/>
</dbReference>
<dbReference type="PANTHER" id="PTHR11993">
    <property type="entry name" value="NADH-UBIQUINONE OXIDOREDUCTASE 49 KDA SUBUNIT"/>
    <property type="match status" value="1"/>
</dbReference>
<dbReference type="Pfam" id="PF00346">
    <property type="entry name" value="Complex1_49kDa"/>
    <property type="match status" value="1"/>
</dbReference>
<dbReference type="SUPFAM" id="SSF56762">
    <property type="entry name" value="HydB/Nqo4-like"/>
    <property type="match status" value="1"/>
</dbReference>
<dbReference type="PROSITE" id="PS00535">
    <property type="entry name" value="COMPLEX1_49K"/>
    <property type="match status" value="1"/>
</dbReference>
<proteinExistence type="inferred from homology"/>
<keyword id="KW-0997">Cell inner membrane</keyword>
<keyword id="KW-1003">Cell membrane</keyword>
<keyword id="KW-0472">Membrane</keyword>
<keyword id="KW-0520">NAD</keyword>
<keyword id="KW-0874">Quinone</keyword>
<keyword id="KW-1185">Reference proteome</keyword>
<keyword id="KW-1278">Translocase</keyword>
<keyword id="KW-0813">Transport</keyword>
<keyword id="KW-0830">Ubiquinone</keyword>
<gene>
    <name evidence="1" type="primary">nuoD</name>
    <name type="ordered locus">TM1040_0744</name>
</gene>
<name>NUOD_RUEST</name>
<protein>
    <recommendedName>
        <fullName evidence="1">NADH-quinone oxidoreductase subunit D</fullName>
        <ecNumber evidence="1">7.1.1.-</ecNumber>
    </recommendedName>
    <alternativeName>
        <fullName evidence="1">NADH dehydrogenase I subunit D</fullName>
    </alternativeName>
    <alternativeName>
        <fullName evidence="1">NDH-1 subunit D</fullName>
    </alternativeName>
</protein>
<organism>
    <name type="scientific">Ruegeria sp. (strain TM1040)</name>
    <name type="common">Silicibacter sp.</name>
    <dbReference type="NCBI Taxonomy" id="292414"/>
    <lineage>
        <taxon>Bacteria</taxon>
        <taxon>Pseudomonadati</taxon>
        <taxon>Pseudomonadota</taxon>
        <taxon>Alphaproteobacteria</taxon>
        <taxon>Rhodobacterales</taxon>
        <taxon>Roseobacteraceae</taxon>
        <taxon>Ruegeria</taxon>
    </lineage>
</organism>
<comment type="function">
    <text evidence="1">NDH-1 shuttles electrons from NADH, via FMN and iron-sulfur (Fe-S) centers, to quinones in the respiratory chain. The immediate electron acceptor for the enzyme in this species is believed to be ubiquinone. Couples the redox reaction to proton translocation (for every two electrons transferred, four hydrogen ions are translocated across the cytoplasmic membrane), and thus conserves the redox energy in a proton gradient.</text>
</comment>
<comment type="catalytic activity">
    <reaction evidence="1">
        <text>a quinone + NADH + 5 H(+)(in) = a quinol + NAD(+) + 4 H(+)(out)</text>
        <dbReference type="Rhea" id="RHEA:57888"/>
        <dbReference type="ChEBI" id="CHEBI:15378"/>
        <dbReference type="ChEBI" id="CHEBI:24646"/>
        <dbReference type="ChEBI" id="CHEBI:57540"/>
        <dbReference type="ChEBI" id="CHEBI:57945"/>
        <dbReference type="ChEBI" id="CHEBI:132124"/>
    </reaction>
</comment>
<comment type="subunit">
    <text evidence="1">NDH-1 is composed of 14 different subunits. Subunits NuoB, C, D, E, F, and G constitute the peripheral sector of the complex.</text>
</comment>
<comment type="subcellular location">
    <subcellularLocation>
        <location evidence="1">Cell inner membrane</location>
        <topology evidence="1">Peripheral membrane protein</topology>
        <orientation evidence="1">Cytoplasmic side</orientation>
    </subcellularLocation>
</comment>
<comment type="similarity">
    <text evidence="1">Belongs to the complex I 49 kDa subunit family.</text>
</comment>